<dbReference type="EC" id="2.3.3.16"/>
<dbReference type="EMBL" id="D63376">
    <property type="protein sequence ID" value="BAA09691.1"/>
    <property type="molecule type" value="mRNA"/>
</dbReference>
<dbReference type="SMR" id="P51044"/>
<dbReference type="PaxDb" id="5061-CADANGAP00008062"/>
<dbReference type="VEuPathDB" id="FungiDB:An09g06680"/>
<dbReference type="VEuPathDB" id="FungiDB:ASPNIDRAFT2_1141371"/>
<dbReference type="VEuPathDB" id="FungiDB:ATCC64974_7730"/>
<dbReference type="VEuPathDB" id="FungiDB:M747DRAFT_318975"/>
<dbReference type="eggNOG" id="KOG2617">
    <property type="taxonomic scope" value="Eukaryota"/>
</dbReference>
<dbReference type="UniPathway" id="UPA00223">
    <property type="reaction ID" value="UER00717"/>
</dbReference>
<dbReference type="GO" id="GO:0005759">
    <property type="term" value="C:mitochondrial matrix"/>
    <property type="evidence" value="ECO:0007669"/>
    <property type="project" value="UniProtKB-SubCell"/>
</dbReference>
<dbReference type="GO" id="GO:0004108">
    <property type="term" value="F:citrate (Si)-synthase activity"/>
    <property type="evidence" value="ECO:0007669"/>
    <property type="project" value="InterPro"/>
</dbReference>
<dbReference type="GO" id="GO:0005975">
    <property type="term" value="P:carbohydrate metabolic process"/>
    <property type="evidence" value="ECO:0007669"/>
    <property type="project" value="TreeGrafter"/>
</dbReference>
<dbReference type="GO" id="GO:0006101">
    <property type="term" value="P:citrate metabolic process"/>
    <property type="evidence" value="ECO:0007669"/>
    <property type="project" value="InterPro"/>
</dbReference>
<dbReference type="GO" id="GO:0006099">
    <property type="term" value="P:tricarboxylic acid cycle"/>
    <property type="evidence" value="ECO:0007669"/>
    <property type="project" value="UniProtKB-UniPathway"/>
</dbReference>
<dbReference type="CDD" id="cd06105">
    <property type="entry name" value="ScCit1-2_like"/>
    <property type="match status" value="1"/>
</dbReference>
<dbReference type="FunFam" id="1.10.230.10:FF:000001">
    <property type="entry name" value="Citrate synthase"/>
    <property type="match status" value="1"/>
</dbReference>
<dbReference type="FunFam" id="1.10.580.10:FF:000001">
    <property type="entry name" value="Citrate synthase"/>
    <property type="match status" value="1"/>
</dbReference>
<dbReference type="Gene3D" id="1.10.580.10">
    <property type="entry name" value="Citrate Synthase, domain 1"/>
    <property type="match status" value="1"/>
</dbReference>
<dbReference type="Gene3D" id="1.10.230.10">
    <property type="entry name" value="Cytochrome P450-Terp, domain 2"/>
    <property type="match status" value="1"/>
</dbReference>
<dbReference type="InterPro" id="IPR016142">
    <property type="entry name" value="Citrate_synth-like_lrg_a-sub"/>
</dbReference>
<dbReference type="InterPro" id="IPR016143">
    <property type="entry name" value="Citrate_synth-like_sm_a-sub"/>
</dbReference>
<dbReference type="InterPro" id="IPR002020">
    <property type="entry name" value="Citrate_synthase"/>
</dbReference>
<dbReference type="InterPro" id="IPR019810">
    <property type="entry name" value="Citrate_synthase_AS"/>
</dbReference>
<dbReference type="InterPro" id="IPR010109">
    <property type="entry name" value="Citrate_synthase_euk"/>
</dbReference>
<dbReference type="InterPro" id="IPR036969">
    <property type="entry name" value="Citrate_synthase_sf"/>
</dbReference>
<dbReference type="NCBIfam" id="TIGR01793">
    <property type="entry name" value="cit_synth_euk"/>
    <property type="match status" value="1"/>
</dbReference>
<dbReference type="NCBIfam" id="NF007128">
    <property type="entry name" value="PRK09569.1"/>
    <property type="match status" value="1"/>
</dbReference>
<dbReference type="PANTHER" id="PTHR11739">
    <property type="entry name" value="CITRATE SYNTHASE"/>
    <property type="match status" value="1"/>
</dbReference>
<dbReference type="PANTHER" id="PTHR11739:SF8">
    <property type="entry name" value="CITRATE SYNTHASE, MITOCHONDRIAL"/>
    <property type="match status" value="1"/>
</dbReference>
<dbReference type="Pfam" id="PF00285">
    <property type="entry name" value="Citrate_synt"/>
    <property type="match status" value="1"/>
</dbReference>
<dbReference type="PRINTS" id="PR00143">
    <property type="entry name" value="CITRTSNTHASE"/>
</dbReference>
<dbReference type="SUPFAM" id="SSF48256">
    <property type="entry name" value="Citrate synthase"/>
    <property type="match status" value="1"/>
</dbReference>
<dbReference type="PROSITE" id="PS00480">
    <property type="entry name" value="CITRATE_SYNTHASE"/>
    <property type="match status" value="1"/>
</dbReference>
<feature type="transit peptide" description="Mitochondrion" evidence="1">
    <location>
        <begin position="1"/>
        <end status="unknown"/>
    </location>
</feature>
<feature type="chain" id="PRO_0000005475" description="Citrate synthase, mitochondrial">
    <location>
        <begin status="unknown"/>
        <end position="475"/>
    </location>
</feature>
<feature type="active site" evidence="2">
    <location>
        <position position="310"/>
    </location>
</feature>
<feature type="active site" evidence="2">
    <location>
        <position position="356"/>
    </location>
</feature>
<feature type="active site" evidence="2">
    <location>
        <position position="411"/>
    </location>
</feature>
<keyword id="KW-0496">Mitochondrion</keyword>
<keyword id="KW-0808">Transferase</keyword>
<keyword id="KW-0809">Transit peptide</keyword>
<keyword id="KW-0816">Tricarboxylic acid cycle</keyword>
<name>CISY_ASPNG</name>
<reference key="1">
    <citation type="submission" date="1995-08" db="EMBL/GenBank/DDBJ databases">
        <title>Cloning and expression of cDNA encoding Aspergillus niger citrate synthase in Esherichia coli.</title>
        <authorList>
            <person name="Oshida Y."/>
            <person name="Miyake K."/>
            <person name="Kanayama S."/>
            <person name="Kirimura K."/>
            <person name="Usami S."/>
        </authorList>
    </citation>
    <scope>NUCLEOTIDE SEQUENCE [MRNA]</scope>
    <source>
        <strain>WU-2223L</strain>
    </source>
</reference>
<accession>P51044</accession>
<organism>
    <name type="scientific">Aspergillus niger</name>
    <dbReference type="NCBI Taxonomy" id="5061"/>
    <lineage>
        <taxon>Eukaryota</taxon>
        <taxon>Fungi</taxon>
        <taxon>Dikarya</taxon>
        <taxon>Ascomycota</taxon>
        <taxon>Pezizomycotina</taxon>
        <taxon>Eurotiomycetes</taxon>
        <taxon>Eurotiomycetidae</taxon>
        <taxon>Eurotiales</taxon>
        <taxon>Aspergillaceae</taxon>
        <taxon>Aspergillus</taxon>
        <taxon>Aspergillus subgen. Circumdati</taxon>
    </lineage>
</organism>
<comment type="catalytic activity">
    <reaction evidence="2">
        <text>oxaloacetate + acetyl-CoA + H2O = citrate + CoA + H(+)</text>
        <dbReference type="Rhea" id="RHEA:16845"/>
        <dbReference type="ChEBI" id="CHEBI:15377"/>
        <dbReference type="ChEBI" id="CHEBI:15378"/>
        <dbReference type="ChEBI" id="CHEBI:16452"/>
        <dbReference type="ChEBI" id="CHEBI:16947"/>
        <dbReference type="ChEBI" id="CHEBI:57287"/>
        <dbReference type="ChEBI" id="CHEBI:57288"/>
        <dbReference type="EC" id="2.3.3.16"/>
    </reaction>
</comment>
<comment type="pathway">
    <text>Carbohydrate metabolism; tricarboxylic acid cycle; isocitrate from oxaloacetate: step 1/2.</text>
</comment>
<comment type="subcellular location">
    <subcellularLocation>
        <location evidence="1">Mitochondrion matrix</location>
    </subcellularLocation>
</comment>
<comment type="miscellaneous">
    <text>Citrate synthase is found in nearly all cells capable of oxidative metabolism.</text>
</comment>
<comment type="similarity">
    <text evidence="3">Belongs to the citrate synthase family.</text>
</comment>
<evidence type="ECO:0000250" key="1"/>
<evidence type="ECO:0000255" key="2">
    <source>
        <dbReference type="PROSITE-ProRule" id="PRU10117"/>
    </source>
</evidence>
<evidence type="ECO:0000305" key="3"/>
<sequence length="475" mass="52154">MASTLRLGTSALRSSSIAAKPVVQSAAFNGLRCYSTGKAKSLKETFAEKLPAELEKVKKLRKEHGSKVIGEVTLDQAYGGARGVKCLVWEGSVLDSEEGIRFRGRTIPECQELLPKAPGGQEPLPEGLFWLLLTGEIPTEQQVRDLSAEWAARSDLPKFIEELIDRCPSTLHPMSQFSLAVTALEHESAFAKAYAKGINKKDYWNYTFEDSMDLIAKLPTIAAKIYRNVFKDGKVAPIQKDKDYSYNLANQLGYGDNNDFVELMRLYLTIHSDHEGGNVSAHTTHLVGSALSSPMLSLAAGLNGLAGPLHGLANQEVLNWLTKMKAAIGNDLSDEAIKNYLWSTLNAGQVVPGYGHAVLRKTDPRYVSQREFALRKLPDDPMFKLVSQVYKIAPGVLTEHGKTKNPYPNVDAHSGVLLQYYGLTEANYYTVLFGVSRALGVLPQLIIDRALGAPIERPKSYSTELSPSLLVLSCK</sequence>
<proteinExistence type="evidence at transcript level"/>
<gene>
    <name type="primary">cit-1</name>
</gene>
<protein>
    <recommendedName>
        <fullName>Citrate synthase, mitochondrial</fullName>
        <ecNumber>2.3.3.16</ecNumber>
    </recommendedName>
</protein>